<name>MZT1_CRYNB</name>
<reference key="1">
    <citation type="journal article" date="2005" name="Science">
        <title>The genome of the basidiomycetous yeast and human pathogen Cryptococcus neoformans.</title>
        <authorList>
            <person name="Loftus B.J."/>
            <person name="Fung E."/>
            <person name="Roncaglia P."/>
            <person name="Rowley D."/>
            <person name="Amedeo P."/>
            <person name="Bruno D."/>
            <person name="Vamathevan J."/>
            <person name="Miranda M."/>
            <person name="Anderson I.J."/>
            <person name="Fraser J.A."/>
            <person name="Allen J.E."/>
            <person name="Bosdet I.E."/>
            <person name="Brent M.R."/>
            <person name="Chiu R."/>
            <person name="Doering T.L."/>
            <person name="Donlin M.J."/>
            <person name="D'Souza C.A."/>
            <person name="Fox D.S."/>
            <person name="Grinberg V."/>
            <person name="Fu J."/>
            <person name="Fukushima M."/>
            <person name="Haas B.J."/>
            <person name="Huang J.C."/>
            <person name="Janbon G."/>
            <person name="Jones S.J.M."/>
            <person name="Koo H.L."/>
            <person name="Krzywinski M.I."/>
            <person name="Kwon-Chung K.J."/>
            <person name="Lengeler K.B."/>
            <person name="Maiti R."/>
            <person name="Marra M.A."/>
            <person name="Marra R.E."/>
            <person name="Mathewson C.A."/>
            <person name="Mitchell T.G."/>
            <person name="Pertea M."/>
            <person name="Riggs F.R."/>
            <person name="Salzberg S.L."/>
            <person name="Schein J.E."/>
            <person name="Shvartsbeyn A."/>
            <person name="Shin H."/>
            <person name="Shumway M."/>
            <person name="Specht C.A."/>
            <person name="Suh B.B."/>
            <person name="Tenney A."/>
            <person name="Utterback T.R."/>
            <person name="Wickes B.L."/>
            <person name="Wortman J.R."/>
            <person name="Wye N.H."/>
            <person name="Kronstad J.W."/>
            <person name="Lodge J.K."/>
            <person name="Heitman J."/>
            <person name="Davis R.W."/>
            <person name="Fraser C.M."/>
            <person name="Hyman R.W."/>
        </authorList>
    </citation>
    <scope>NUCLEOTIDE SEQUENCE [LARGE SCALE GENOMIC DNA]</scope>
    <source>
        <strain>B-3501A</strain>
    </source>
</reference>
<protein>
    <recommendedName>
        <fullName>Mitotic-spindle organizing protein 1</fullName>
    </recommendedName>
    <alternativeName>
        <fullName>Mitotic-spindle organizing protein associated with a ring of gamma-tubulin 1</fullName>
    </alternativeName>
</protein>
<organism>
    <name type="scientific">Cryptococcus neoformans var. neoformans serotype D (strain B-3501A)</name>
    <name type="common">Filobasidiella neoformans</name>
    <dbReference type="NCBI Taxonomy" id="283643"/>
    <lineage>
        <taxon>Eukaryota</taxon>
        <taxon>Fungi</taxon>
        <taxon>Dikarya</taxon>
        <taxon>Basidiomycota</taxon>
        <taxon>Agaricomycotina</taxon>
        <taxon>Tremellomycetes</taxon>
        <taxon>Tremellales</taxon>
        <taxon>Cryptococcaceae</taxon>
        <taxon>Cryptococcus</taxon>
        <taxon>Cryptococcus neoformans species complex</taxon>
    </lineage>
</organism>
<accession>P0CP05</accession>
<accession>Q560S2</accession>
<accession>Q5KPS1</accession>
<sequence length="72" mass="7784">MSSTQDEAILRNARETIDSLYDLSQLLQTGLDKSTLSICVGMIEQGANPDTLAAVIKELRSENEALNSQSNA</sequence>
<keyword id="KW-0963">Cytoplasm</keyword>
<keyword id="KW-0206">Cytoskeleton</keyword>
<evidence type="ECO:0000250" key="1"/>
<evidence type="ECO:0000305" key="2"/>
<feature type="chain" id="PRO_0000410159" description="Mitotic-spindle organizing protein 1">
    <location>
        <begin position="1"/>
        <end position="72"/>
    </location>
</feature>
<dbReference type="EMBL" id="AAEY01000001">
    <property type="protein sequence ID" value="EAL23521.1"/>
    <property type="molecule type" value="Genomic_DNA"/>
</dbReference>
<dbReference type="RefSeq" id="XP_778168.1">
    <property type="nucleotide sequence ID" value="XM_773075.1"/>
</dbReference>
<dbReference type="SMR" id="P0CP05"/>
<dbReference type="EnsemblFungi" id="AAW40722">
    <property type="protein sequence ID" value="AAW40722"/>
    <property type="gene ID" value="CNA01750"/>
</dbReference>
<dbReference type="GeneID" id="4933419"/>
<dbReference type="KEGG" id="cnb:CNBA1680"/>
<dbReference type="VEuPathDB" id="FungiDB:CNBA1680"/>
<dbReference type="HOGENOM" id="CLU_160285_0_1_1"/>
<dbReference type="OrthoDB" id="2572at5206"/>
<dbReference type="GO" id="GO:0005737">
    <property type="term" value="C:cytoplasm"/>
    <property type="evidence" value="ECO:0007669"/>
    <property type="project" value="UniProtKB-KW"/>
</dbReference>
<dbReference type="GO" id="GO:0000931">
    <property type="term" value="C:gamma-tubulin ring complex"/>
    <property type="evidence" value="ECO:0007669"/>
    <property type="project" value="InterPro"/>
</dbReference>
<dbReference type="GO" id="GO:0031021">
    <property type="term" value="C:interphase microtubule organizing center"/>
    <property type="evidence" value="ECO:0007669"/>
    <property type="project" value="TreeGrafter"/>
</dbReference>
<dbReference type="GO" id="GO:0044732">
    <property type="term" value="C:mitotic spindle pole body"/>
    <property type="evidence" value="ECO:0007669"/>
    <property type="project" value="TreeGrafter"/>
</dbReference>
<dbReference type="GO" id="GO:0005819">
    <property type="term" value="C:spindle"/>
    <property type="evidence" value="ECO:0007669"/>
    <property type="project" value="TreeGrafter"/>
</dbReference>
<dbReference type="GO" id="GO:0033566">
    <property type="term" value="P:gamma-tubulin complex localization"/>
    <property type="evidence" value="ECO:0007669"/>
    <property type="project" value="InterPro"/>
</dbReference>
<dbReference type="GO" id="GO:0051415">
    <property type="term" value="P:microtubule nucleation by interphase microtubule organizing center"/>
    <property type="evidence" value="ECO:0007669"/>
    <property type="project" value="TreeGrafter"/>
</dbReference>
<dbReference type="GO" id="GO:0090307">
    <property type="term" value="P:mitotic spindle assembly"/>
    <property type="evidence" value="ECO:0007669"/>
    <property type="project" value="TreeGrafter"/>
</dbReference>
<dbReference type="InterPro" id="IPR022214">
    <property type="entry name" value="MZT1"/>
</dbReference>
<dbReference type="PANTHER" id="PTHR28520">
    <property type="entry name" value="MITOTIC-SPINDLE ORGANIZING PROTEIN 1"/>
    <property type="match status" value="1"/>
</dbReference>
<dbReference type="PANTHER" id="PTHR28520:SF2">
    <property type="entry name" value="MITOTIC-SPINDLE ORGANIZING PROTEIN 1"/>
    <property type="match status" value="1"/>
</dbReference>
<dbReference type="Pfam" id="PF12554">
    <property type="entry name" value="MOZART1"/>
    <property type="match status" value="1"/>
</dbReference>
<gene>
    <name type="ordered locus">CNBA1680</name>
</gene>
<proteinExistence type="inferred from homology"/>
<comment type="function">
    <text evidence="1">Required for gamma-tubulin complex recruitment to the microtubule organizing center (MTOC).</text>
</comment>
<comment type="subunit">
    <text evidence="1">Part of the gamma-tubulin complex.</text>
</comment>
<comment type="subcellular location">
    <subcellularLocation>
        <location evidence="1">Cytoplasm</location>
        <location evidence="1">Cytoskeleton</location>
        <location evidence="1">Microtubule organizing center</location>
        <location evidence="1">Spindle pole body</location>
    </subcellularLocation>
</comment>
<comment type="similarity">
    <text evidence="2">Belongs to the MOZART1 family.</text>
</comment>